<dbReference type="EC" id="6.1.1.11" evidence="1"/>
<dbReference type="EMBL" id="CP001661">
    <property type="protein sequence ID" value="ACT16176.1"/>
    <property type="molecule type" value="Genomic_DNA"/>
</dbReference>
<dbReference type="SMR" id="C6E7Z3"/>
<dbReference type="STRING" id="443144.GM21_0089"/>
<dbReference type="KEGG" id="gem:GM21_0089"/>
<dbReference type="eggNOG" id="COG0172">
    <property type="taxonomic scope" value="Bacteria"/>
</dbReference>
<dbReference type="HOGENOM" id="CLU_023797_1_1_7"/>
<dbReference type="OrthoDB" id="9804647at2"/>
<dbReference type="UniPathway" id="UPA00906">
    <property type="reaction ID" value="UER00895"/>
</dbReference>
<dbReference type="GO" id="GO:0005737">
    <property type="term" value="C:cytoplasm"/>
    <property type="evidence" value="ECO:0007669"/>
    <property type="project" value="UniProtKB-SubCell"/>
</dbReference>
<dbReference type="GO" id="GO:0005524">
    <property type="term" value="F:ATP binding"/>
    <property type="evidence" value="ECO:0007669"/>
    <property type="project" value="UniProtKB-UniRule"/>
</dbReference>
<dbReference type="GO" id="GO:0004828">
    <property type="term" value="F:serine-tRNA ligase activity"/>
    <property type="evidence" value="ECO:0007669"/>
    <property type="project" value="UniProtKB-UniRule"/>
</dbReference>
<dbReference type="GO" id="GO:0016260">
    <property type="term" value="P:selenocysteine biosynthetic process"/>
    <property type="evidence" value="ECO:0007669"/>
    <property type="project" value="UniProtKB-UniRule"/>
</dbReference>
<dbReference type="GO" id="GO:0006434">
    <property type="term" value="P:seryl-tRNA aminoacylation"/>
    <property type="evidence" value="ECO:0007669"/>
    <property type="project" value="UniProtKB-UniRule"/>
</dbReference>
<dbReference type="CDD" id="cd00770">
    <property type="entry name" value="SerRS_core"/>
    <property type="match status" value="1"/>
</dbReference>
<dbReference type="Gene3D" id="3.30.930.10">
    <property type="entry name" value="Bira Bifunctional Protein, Domain 2"/>
    <property type="match status" value="1"/>
</dbReference>
<dbReference type="Gene3D" id="1.10.287.40">
    <property type="entry name" value="Serine-tRNA synthetase, tRNA binding domain"/>
    <property type="match status" value="1"/>
</dbReference>
<dbReference type="HAMAP" id="MF_00176">
    <property type="entry name" value="Ser_tRNA_synth_type1"/>
    <property type="match status" value="1"/>
</dbReference>
<dbReference type="InterPro" id="IPR002314">
    <property type="entry name" value="aa-tRNA-synt_IIb"/>
</dbReference>
<dbReference type="InterPro" id="IPR006195">
    <property type="entry name" value="aa-tRNA-synth_II"/>
</dbReference>
<dbReference type="InterPro" id="IPR045864">
    <property type="entry name" value="aa-tRNA-synth_II/BPL/LPL"/>
</dbReference>
<dbReference type="InterPro" id="IPR002317">
    <property type="entry name" value="Ser-tRNA-ligase_type_1"/>
</dbReference>
<dbReference type="InterPro" id="IPR015866">
    <property type="entry name" value="Ser-tRNA-synth_1_N"/>
</dbReference>
<dbReference type="InterPro" id="IPR042103">
    <property type="entry name" value="SerRS_1_N_sf"/>
</dbReference>
<dbReference type="InterPro" id="IPR033729">
    <property type="entry name" value="SerRS_core"/>
</dbReference>
<dbReference type="InterPro" id="IPR010978">
    <property type="entry name" value="tRNA-bd_arm"/>
</dbReference>
<dbReference type="NCBIfam" id="TIGR00414">
    <property type="entry name" value="serS"/>
    <property type="match status" value="1"/>
</dbReference>
<dbReference type="PANTHER" id="PTHR43697:SF1">
    <property type="entry name" value="SERINE--TRNA LIGASE"/>
    <property type="match status" value="1"/>
</dbReference>
<dbReference type="PANTHER" id="PTHR43697">
    <property type="entry name" value="SERYL-TRNA SYNTHETASE"/>
    <property type="match status" value="1"/>
</dbReference>
<dbReference type="Pfam" id="PF02403">
    <property type="entry name" value="Seryl_tRNA_N"/>
    <property type="match status" value="1"/>
</dbReference>
<dbReference type="Pfam" id="PF00587">
    <property type="entry name" value="tRNA-synt_2b"/>
    <property type="match status" value="1"/>
</dbReference>
<dbReference type="PIRSF" id="PIRSF001529">
    <property type="entry name" value="Ser-tRNA-synth_IIa"/>
    <property type="match status" value="1"/>
</dbReference>
<dbReference type="PRINTS" id="PR00981">
    <property type="entry name" value="TRNASYNTHSER"/>
</dbReference>
<dbReference type="SUPFAM" id="SSF55681">
    <property type="entry name" value="Class II aaRS and biotin synthetases"/>
    <property type="match status" value="1"/>
</dbReference>
<dbReference type="SUPFAM" id="SSF46589">
    <property type="entry name" value="tRNA-binding arm"/>
    <property type="match status" value="1"/>
</dbReference>
<dbReference type="PROSITE" id="PS50862">
    <property type="entry name" value="AA_TRNA_LIGASE_II"/>
    <property type="match status" value="1"/>
</dbReference>
<gene>
    <name evidence="1" type="primary">serS</name>
    <name type="ordered locus">GM21_0089</name>
</gene>
<accession>C6E7Z3</accession>
<sequence>MLDARYIRENLETVEARLKTRGEGVDIALFKELDGRRRELLQQSETLKALRNKVTEEIARLQDKSQAAERKTEMREVSQQIKGIDESLRSVEEELQNFLLTVPNVPNETTPIGRSEEDNVVVRTWGEVPALSFEPKPHWEIGEGLGILDFERGAKLAGARFTLYRGAGARLERALINYMLDLHIDEHKYIEMLPPFMVNRECMTGTGQLPKFEEDLFHMEGVDFFLIPTAEVPVTNIHRGEILKGSDLPISYVAYTPCFRKEAGSYGKDTRGLIRQHQFNKVELVKFTSPEDSYEQLQKLLGHAEEVLRRLQIPYRVVELCTGDIGFSAAKTFDIEVWLPGQNCYREISSCSCFEDFQARRAGIRFRPEEKAKPEFVHTLNGSGLAVGRTLVAVLENYQQADGSVLIPEVLRPYMGGAERIS</sequence>
<protein>
    <recommendedName>
        <fullName evidence="1">Serine--tRNA ligase</fullName>
        <ecNumber evidence="1">6.1.1.11</ecNumber>
    </recommendedName>
    <alternativeName>
        <fullName evidence="1">Seryl-tRNA synthetase</fullName>
        <shortName evidence="1">SerRS</shortName>
    </alternativeName>
    <alternativeName>
        <fullName evidence="1">Seryl-tRNA(Ser/Sec) synthetase</fullName>
    </alternativeName>
</protein>
<keyword id="KW-0030">Aminoacyl-tRNA synthetase</keyword>
<keyword id="KW-0067">ATP-binding</keyword>
<keyword id="KW-0963">Cytoplasm</keyword>
<keyword id="KW-0436">Ligase</keyword>
<keyword id="KW-0547">Nucleotide-binding</keyword>
<keyword id="KW-0648">Protein biosynthesis</keyword>
<name>SYS_GEOSM</name>
<organism>
    <name type="scientific">Geobacter sp. (strain M21)</name>
    <dbReference type="NCBI Taxonomy" id="443144"/>
    <lineage>
        <taxon>Bacteria</taxon>
        <taxon>Pseudomonadati</taxon>
        <taxon>Thermodesulfobacteriota</taxon>
        <taxon>Desulfuromonadia</taxon>
        <taxon>Geobacterales</taxon>
        <taxon>Geobacteraceae</taxon>
        <taxon>Geobacter</taxon>
    </lineage>
</organism>
<evidence type="ECO:0000255" key="1">
    <source>
        <dbReference type="HAMAP-Rule" id="MF_00176"/>
    </source>
</evidence>
<proteinExistence type="inferred from homology"/>
<comment type="function">
    <text evidence="1">Catalyzes the attachment of serine to tRNA(Ser). Is also able to aminoacylate tRNA(Sec) with serine, to form the misacylated tRNA L-seryl-tRNA(Sec), which will be further converted into selenocysteinyl-tRNA(Sec).</text>
</comment>
<comment type="catalytic activity">
    <reaction evidence="1">
        <text>tRNA(Ser) + L-serine + ATP = L-seryl-tRNA(Ser) + AMP + diphosphate + H(+)</text>
        <dbReference type="Rhea" id="RHEA:12292"/>
        <dbReference type="Rhea" id="RHEA-COMP:9669"/>
        <dbReference type="Rhea" id="RHEA-COMP:9703"/>
        <dbReference type="ChEBI" id="CHEBI:15378"/>
        <dbReference type="ChEBI" id="CHEBI:30616"/>
        <dbReference type="ChEBI" id="CHEBI:33019"/>
        <dbReference type="ChEBI" id="CHEBI:33384"/>
        <dbReference type="ChEBI" id="CHEBI:78442"/>
        <dbReference type="ChEBI" id="CHEBI:78533"/>
        <dbReference type="ChEBI" id="CHEBI:456215"/>
        <dbReference type="EC" id="6.1.1.11"/>
    </reaction>
</comment>
<comment type="catalytic activity">
    <reaction evidence="1">
        <text>tRNA(Sec) + L-serine + ATP = L-seryl-tRNA(Sec) + AMP + diphosphate + H(+)</text>
        <dbReference type="Rhea" id="RHEA:42580"/>
        <dbReference type="Rhea" id="RHEA-COMP:9742"/>
        <dbReference type="Rhea" id="RHEA-COMP:10128"/>
        <dbReference type="ChEBI" id="CHEBI:15378"/>
        <dbReference type="ChEBI" id="CHEBI:30616"/>
        <dbReference type="ChEBI" id="CHEBI:33019"/>
        <dbReference type="ChEBI" id="CHEBI:33384"/>
        <dbReference type="ChEBI" id="CHEBI:78442"/>
        <dbReference type="ChEBI" id="CHEBI:78533"/>
        <dbReference type="ChEBI" id="CHEBI:456215"/>
        <dbReference type="EC" id="6.1.1.11"/>
    </reaction>
</comment>
<comment type="pathway">
    <text evidence="1">Aminoacyl-tRNA biosynthesis; selenocysteinyl-tRNA(Sec) biosynthesis; L-seryl-tRNA(Sec) from L-serine and tRNA(Sec): step 1/1.</text>
</comment>
<comment type="subunit">
    <text evidence="1">Homodimer. The tRNA molecule binds across the dimer.</text>
</comment>
<comment type="subcellular location">
    <subcellularLocation>
        <location evidence="1">Cytoplasm</location>
    </subcellularLocation>
</comment>
<comment type="domain">
    <text evidence="1">Consists of two distinct domains, a catalytic core and a N-terminal extension that is involved in tRNA binding.</text>
</comment>
<comment type="similarity">
    <text evidence="1">Belongs to the class-II aminoacyl-tRNA synthetase family. Type-1 seryl-tRNA synthetase subfamily.</text>
</comment>
<feature type="chain" id="PRO_1000203758" description="Serine--tRNA ligase">
    <location>
        <begin position="1"/>
        <end position="422"/>
    </location>
</feature>
<feature type="binding site" evidence="1">
    <location>
        <begin position="229"/>
        <end position="231"/>
    </location>
    <ligand>
        <name>L-serine</name>
        <dbReference type="ChEBI" id="CHEBI:33384"/>
    </ligand>
</feature>
<feature type="binding site" evidence="1">
    <location>
        <begin position="260"/>
        <end position="262"/>
    </location>
    <ligand>
        <name>ATP</name>
        <dbReference type="ChEBI" id="CHEBI:30616"/>
    </ligand>
</feature>
<feature type="binding site" evidence="1">
    <location>
        <position position="283"/>
    </location>
    <ligand>
        <name>L-serine</name>
        <dbReference type="ChEBI" id="CHEBI:33384"/>
    </ligand>
</feature>
<feature type="binding site" evidence="1">
    <location>
        <begin position="347"/>
        <end position="350"/>
    </location>
    <ligand>
        <name>ATP</name>
        <dbReference type="ChEBI" id="CHEBI:30616"/>
    </ligand>
</feature>
<feature type="binding site" evidence="1">
    <location>
        <position position="383"/>
    </location>
    <ligand>
        <name>L-serine</name>
        <dbReference type="ChEBI" id="CHEBI:33384"/>
    </ligand>
</feature>
<reference key="1">
    <citation type="submission" date="2009-07" db="EMBL/GenBank/DDBJ databases">
        <title>Complete sequence of Geobacter sp. M21.</title>
        <authorList>
            <consortium name="US DOE Joint Genome Institute"/>
            <person name="Lucas S."/>
            <person name="Copeland A."/>
            <person name="Lapidus A."/>
            <person name="Glavina del Rio T."/>
            <person name="Dalin E."/>
            <person name="Tice H."/>
            <person name="Bruce D."/>
            <person name="Goodwin L."/>
            <person name="Pitluck S."/>
            <person name="Saunders E."/>
            <person name="Brettin T."/>
            <person name="Detter J.C."/>
            <person name="Han C."/>
            <person name="Larimer F."/>
            <person name="Land M."/>
            <person name="Hauser L."/>
            <person name="Kyrpides N."/>
            <person name="Ovchinnikova G."/>
            <person name="Lovley D."/>
        </authorList>
    </citation>
    <scope>NUCLEOTIDE SEQUENCE [LARGE SCALE GENOMIC DNA]</scope>
    <source>
        <strain>M21</strain>
    </source>
</reference>